<gene>
    <name evidence="1" type="primary">upp</name>
    <name type="ordered locus">GK3368</name>
</gene>
<proteinExistence type="inferred from homology"/>
<accession>Q5KUI3</accession>
<feature type="chain" id="PRO_0000120831" description="Uracil phosphoribosyltransferase">
    <location>
        <begin position="1"/>
        <end position="209"/>
    </location>
</feature>
<feature type="binding site" evidence="1">
    <location>
        <position position="79"/>
    </location>
    <ligand>
        <name>5-phospho-alpha-D-ribose 1-diphosphate</name>
        <dbReference type="ChEBI" id="CHEBI:58017"/>
    </ligand>
</feature>
<feature type="binding site" evidence="1">
    <location>
        <position position="104"/>
    </location>
    <ligand>
        <name>5-phospho-alpha-D-ribose 1-diphosphate</name>
        <dbReference type="ChEBI" id="CHEBI:58017"/>
    </ligand>
</feature>
<feature type="binding site" evidence="1">
    <location>
        <begin position="131"/>
        <end position="139"/>
    </location>
    <ligand>
        <name>5-phospho-alpha-D-ribose 1-diphosphate</name>
        <dbReference type="ChEBI" id="CHEBI:58017"/>
    </ligand>
</feature>
<feature type="binding site" evidence="1">
    <location>
        <position position="194"/>
    </location>
    <ligand>
        <name>uracil</name>
        <dbReference type="ChEBI" id="CHEBI:17568"/>
    </ligand>
</feature>
<feature type="binding site" evidence="1">
    <location>
        <begin position="199"/>
        <end position="201"/>
    </location>
    <ligand>
        <name>uracil</name>
        <dbReference type="ChEBI" id="CHEBI:17568"/>
    </ligand>
</feature>
<feature type="binding site" evidence="1">
    <location>
        <position position="200"/>
    </location>
    <ligand>
        <name>5-phospho-alpha-D-ribose 1-diphosphate</name>
        <dbReference type="ChEBI" id="CHEBI:58017"/>
    </ligand>
</feature>
<reference key="1">
    <citation type="journal article" date="2004" name="Nucleic Acids Res.">
        <title>Thermoadaptation trait revealed by the genome sequence of thermophilic Geobacillus kaustophilus.</title>
        <authorList>
            <person name="Takami H."/>
            <person name="Takaki Y."/>
            <person name="Chee G.-J."/>
            <person name="Nishi S."/>
            <person name="Shimamura S."/>
            <person name="Suzuki H."/>
            <person name="Matsui S."/>
            <person name="Uchiyama I."/>
        </authorList>
    </citation>
    <scope>NUCLEOTIDE SEQUENCE [LARGE SCALE GENOMIC DNA]</scope>
    <source>
        <strain>HTA426</strain>
    </source>
</reference>
<dbReference type="EC" id="2.4.2.9" evidence="1"/>
<dbReference type="EMBL" id="BA000043">
    <property type="protein sequence ID" value="BAD77653.1"/>
    <property type="molecule type" value="Genomic_DNA"/>
</dbReference>
<dbReference type="RefSeq" id="WP_011232835.1">
    <property type="nucleotide sequence ID" value="NC_006510.1"/>
</dbReference>
<dbReference type="SMR" id="Q5KUI3"/>
<dbReference type="STRING" id="235909.GK3368"/>
<dbReference type="DrugBank" id="DB03685">
    <property type="generic name" value="Uridine monophosphate"/>
</dbReference>
<dbReference type="GeneID" id="32065251"/>
<dbReference type="KEGG" id="gka:GK3368"/>
<dbReference type="eggNOG" id="COG0035">
    <property type="taxonomic scope" value="Bacteria"/>
</dbReference>
<dbReference type="HOGENOM" id="CLU_067096_2_2_9"/>
<dbReference type="UniPathway" id="UPA00574">
    <property type="reaction ID" value="UER00636"/>
</dbReference>
<dbReference type="Proteomes" id="UP000001172">
    <property type="component" value="Chromosome"/>
</dbReference>
<dbReference type="GO" id="GO:0005525">
    <property type="term" value="F:GTP binding"/>
    <property type="evidence" value="ECO:0007669"/>
    <property type="project" value="UniProtKB-KW"/>
</dbReference>
<dbReference type="GO" id="GO:0000287">
    <property type="term" value="F:magnesium ion binding"/>
    <property type="evidence" value="ECO:0007669"/>
    <property type="project" value="UniProtKB-UniRule"/>
</dbReference>
<dbReference type="GO" id="GO:0004845">
    <property type="term" value="F:uracil phosphoribosyltransferase activity"/>
    <property type="evidence" value="ECO:0007669"/>
    <property type="project" value="UniProtKB-UniRule"/>
</dbReference>
<dbReference type="GO" id="GO:0044206">
    <property type="term" value="P:UMP salvage"/>
    <property type="evidence" value="ECO:0007669"/>
    <property type="project" value="UniProtKB-UniRule"/>
</dbReference>
<dbReference type="GO" id="GO:0006223">
    <property type="term" value="P:uracil salvage"/>
    <property type="evidence" value="ECO:0007669"/>
    <property type="project" value="InterPro"/>
</dbReference>
<dbReference type="CDD" id="cd06223">
    <property type="entry name" value="PRTases_typeI"/>
    <property type="match status" value="1"/>
</dbReference>
<dbReference type="FunFam" id="3.40.50.2020:FF:000003">
    <property type="entry name" value="Uracil phosphoribosyltransferase"/>
    <property type="match status" value="1"/>
</dbReference>
<dbReference type="Gene3D" id="3.40.50.2020">
    <property type="match status" value="1"/>
</dbReference>
<dbReference type="HAMAP" id="MF_01218_B">
    <property type="entry name" value="Upp_B"/>
    <property type="match status" value="1"/>
</dbReference>
<dbReference type="InterPro" id="IPR000836">
    <property type="entry name" value="PRibTrfase_dom"/>
</dbReference>
<dbReference type="InterPro" id="IPR029057">
    <property type="entry name" value="PRTase-like"/>
</dbReference>
<dbReference type="InterPro" id="IPR034332">
    <property type="entry name" value="Upp_B"/>
</dbReference>
<dbReference type="InterPro" id="IPR050054">
    <property type="entry name" value="UPRTase/APRTase"/>
</dbReference>
<dbReference type="InterPro" id="IPR005765">
    <property type="entry name" value="Ura_phspho_trans"/>
</dbReference>
<dbReference type="NCBIfam" id="NF001097">
    <property type="entry name" value="PRK00129.1"/>
    <property type="match status" value="1"/>
</dbReference>
<dbReference type="NCBIfam" id="TIGR01091">
    <property type="entry name" value="upp"/>
    <property type="match status" value="1"/>
</dbReference>
<dbReference type="PANTHER" id="PTHR32315">
    <property type="entry name" value="ADENINE PHOSPHORIBOSYLTRANSFERASE"/>
    <property type="match status" value="1"/>
</dbReference>
<dbReference type="PANTHER" id="PTHR32315:SF4">
    <property type="entry name" value="URACIL PHOSPHORIBOSYLTRANSFERASE, CHLOROPLASTIC"/>
    <property type="match status" value="1"/>
</dbReference>
<dbReference type="Pfam" id="PF14681">
    <property type="entry name" value="UPRTase"/>
    <property type="match status" value="1"/>
</dbReference>
<dbReference type="SUPFAM" id="SSF53271">
    <property type="entry name" value="PRTase-like"/>
    <property type="match status" value="1"/>
</dbReference>
<protein>
    <recommendedName>
        <fullName evidence="1">Uracil phosphoribosyltransferase</fullName>
        <ecNumber evidence="1">2.4.2.9</ecNumber>
    </recommendedName>
    <alternativeName>
        <fullName evidence="1">UMP pyrophosphorylase</fullName>
    </alternativeName>
    <alternativeName>
        <fullName evidence="1">UPRTase</fullName>
    </alternativeName>
</protein>
<organism>
    <name type="scientific">Geobacillus kaustophilus (strain HTA426)</name>
    <dbReference type="NCBI Taxonomy" id="235909"/>
    <lineage>
        <taxon>Bacteria</taxon>
        <taxon>Bacillati</taxon>
        <taxon>Bacillota</taxon>
        <taxon>Bacilli</taxon>
        <taxon>Bacillales</taxon>
        <taxon>Anoxybacillaceae</taxon>
        <taxon>Geobacillus</taxon>
        <taxon>Geobacillus thermoleovorans group</taxon>
    </lineage>
</organism>
<keyword id="KW-0021">Allosteric enzyme</keyword>
<keyword id="KW-0328">Glycosyltransferase</keyword>
<keyword id="KW-0342">GTP-binding</keyword>
<keyword id="KW-0460">Magnesium</keyword>
<keyword id="KW-0547">Nucleotide-binding</keyword>
<keyword id="KW-1185">Reference proteome</keyword>
<keyword id="KW-0808">Transferase</keyword>
<evidence type="ECO:0000255" key="1">
    <source>
        <dbReference type="HAMAP-Rule" id="MF_01218"/>
    </source>
</evidence>
<comment type="function">
    <text evidence="1">Catalyzes the conversion of uracil and 5-phospho-alpha-D-ribose 1-diphosphate (PRPP) to UMP and diphosphate.</text>
</comment>
<comment type="catalytic activity">
    <reaction evidence="1">
        <text>UMP + diphosphate = 5-phospho-alpha-D-ribose 1-diphosphate + uracil</text>
        <dbReference type="Rhea" id="RHEA:13017"/>
        <dbReference type="ChEBI" id="CHEBI:17568"/>
        <dbReference type="ChEBI" id="CHEBI:33019"/>
        <dbReference type="ChEBI" id="CHEBI:57865"/>
        <dbReference type="ChEBI" id="CHEBI:58017"/>
        <dbReference type="EC" id="2.4.2.9"/>
    </reaction>
</comment>
<comment type="cofactor">
    <cofactor evidence="1">
        <name>Mg(2+)</name>
        <dbReference type="ChEBI" id="CHEBI:18420"/>
    </cofactor>
    <text evidence="1">Binds 1 Mg(2+) ion per subunit. The magnesium is bound as Mg-PRPP.</text>
</comment>
<comment type="activity regulation">
    <text evidence="1">Allosterically activated by GTP.</text>
</comment>
<comment type="pathway">
    <text evidence="1">Pyrimidine metabolism; UMP biosynthesis via salvage pathway; UMP from uracil: step 1/1.</text>
</comment>
<comment type="similarity">
    <text evidence="1">Belongs to the UPRTase family.</text>
</comment>
<sequence length="209" mass="22832">MGKVYVFDHPLIQHKLTYIRDKNTGTKEFRELVDEVATLMAFEITRDLPLEEVEIETPVSKARAKVIAGKKLGVIPILRAGIGMVDGILKLIPAAKVGHIGLYRDPQTLKPVEYYVKLPSDVEERDFIIVDPMLATGGSAVAAIDALKKRGAKSIKFMCLIAAPEGVKAVETAHPDVDIYIAALDERLNDHGYIVPGLGDAGDRLFGTK</sequence>
<name>UPP_GEOKA</name>